<reference key="1">
    <citation type="journal article" date="2004" name="Proc. Natl. Acad. Sci. U.S.A.">
        <title>Complete genomes of two clinical Staphylococcus aureus strains: evidence for the rapid evolution of virulence and drug resistance.</title>
        <authorList>
            <person name="Holden M.T.G."/>
            <person name="Feil E.J."/>
            <person name="Lindsay J.A."/>
            <person name="Peacock S.J."/>
            <person name="Day N.P.J."/>
            <person name="Enright M.C."/>
            <person name="Foster T.J."/>
            <person name="Moore C.E."/>
            <person name="Hurst L."/>
            <person name="Atkin R."/>
            <person name="Barron A."/>
            <person name="Bason N."/>
            <person name="Bentley S.D."/>
            <person name="Chillingworth C."/>
            <person name="Chillingworth T."/>
            <person name="Churcher C."/>
            <person name="Clark L."/>
            <person name="Corton C."/>
            <person name="Cronin A."/>
            <person name="Doggett J."/>
            <person name="Dowd L."/>
            <person name="Feltwell T."/>
            <person name="Hance Z."/>
            <person name="Harris B."/>
            <person name="Hauser H."/>
            <person name="Holroyd S."/>
            <person name="Jagels K."/>
            <person name="James K.D."/>
            <person name="Lennard N."/>
            <person name="Line A."/>
            <person name="Mayes R."/>
            <person name="Moule S."/>
            <person name="Mungall K."/>
            <person name="Ormond D."/>
            <person name="Quail M.A."/>
            <person name="Rabbinowitsch E."/>
            <person name="Rutherford K.M."/>
            <person name="Sanders M."/>
            <person name="Sharp S."/>
            <person name="Simmonds M."/>
            <person name="Stevens K."/>
            <person name="Whitehead S."/>
            <person name="Barrell B.G."/>
            <person name="Spratt B.G."/>
            <person name="Parkhill J."/>
        </authorList>
    </citation>
    <scope>NUCLEOTIDE SEQUENCE [LARGE SCALE GENOMIC DNA]</scope>
    <source>
        <strain>MRSA252</strain>
    </source>
</reference>
<gene>
    <name type="ordered locus">SAR2393</name>
</gene>
<dbReference type="EC" id="1.17.1.9"/>
<dbReference type="EMBL" id="BX571856">
    <property type="protein sequence ID" value="CAG41375.1"/>
    <property type="molecule type" value="Genomic_DNA"/>
</dbReference>
<dbReference type="SMR" id="Q6GEC4"/>
<dbReference type="KEGG" id="sar:SAR2393"/>
<dbReference type="HOGENOM" id="CLU_000422_2_1_9"/>
<dbReference type="Proteomes" id="UP000000596">
    <property type="component" value="Chromosome"/>
</dbReference>
<dbReference type="GO" id="GO:0016020">
    <property type="term" value="C:membrane"/>
    <property type="evidence" value="ECO:0007669"/>
    <property type="project" value="TreeGrafter"/>
</dbReference>
<dbReference type="GO" id="GO:0051537">
    <property type="term" value="F:2 iron, 2 sulfur cluster binding"/>
    <property type="evidence" value="ECO:0007669"/>
    <property type="project" value="UniProtKB-KW"/>
</dbReference>
<dbReference type="GO" id="GO:0051539">
    <property type="term" value="F:4 iron, 4 sulfur cluster binding"/>
    <property type="evidence" value="ECO:0007669"/>
    <property type="project" value="UniProtKB-KW"/>
</dbReference>
<dbReference type="GO" id="GO:0008863">
    <property type="term" value="F:formate dehydrogenase (NAD+) activity"/>
    <property type="evidence" value="ECO:0007669"/>
    <property type="project" value="UniProtKB-EC"/>
</dbReference>
<dbReference type="GO" id="GO:0046872">
    <property type="term" value="F:metal ion binding"/>
    <property type="evidence" value="ECO:0007669"/>
    <property type="project" value="UniProtKB-KW"/>
</dbReference>
<dbReference type="GO" id="GO:0043546">
    <property type="term" value="F:molybdopterin cofactor binding"/>
    <property type="evidence" value="ECO:0007669"/>
    <property type="project" value="InterPro"/>
</dbReference>
<dbReference type="GO" id="GO:0003954">
    <property type="term" value="F:NADH dehydrogenase activity"/>
    <property type="evidence" value="ECO:0007669"/>
    <property type="project" value="TreeGrafter"/>
</dbReference>
<dbReference type="GO" id="GO:0015942">
    <property type="term" value="P:formate metabolic process"/>
    <property type="evidence" value="ECO:0007669"/>
    <property type="project" value="InterPro"/>
</dbReference>
<dbReference type="GO" id="GO:0022904">
    <property type="term" value="P:respiratory electron transport chain"/>
    <property type="evidence" value="ECO:0007669"/>
    <property type="project" value="TreeGrafter"/>
</dbReference>
<dbReference type="CDD" id="cd00207">
    <property type="entry name" value="fer2"/>
    <property type="match status" value="1"/>
</dbReference>
<dbReference type="CDD" id="cd02792">
    <property type="entry name" value="MopB_CT_Formate-Dh-Na-like"/>
    <property type="match status" value="1"/>
</dbReference>
<dbReference type="CDD" id="cd02753">
    <property type="entry name" value="MopB_Formate-Dh-H"/>
    <property type="match status" value="1"/>
</dbReference>
<dbReference type="FunFam" id="2.20.25.90:FF:000001">
    <property type="entry name" value="Formate dehydrogenase subunit alpha"/>
    <property type="match status" value="1"/>
</dbReference>
<dbReference type="FunFam" id="3.10.20.740:FF:000003">
    <property type="entry name" value="Formate dehydrogenase subunit alpha"/>
    <property type="match status" value="1"/>
</dbReference>
<dbReference type="FunFam" id="3.40.228.10:FF:000002">
    <property type="entry name" value="Formate dehydrogenase subunit alpha"/>
    <property type="match status" value="1"/>
</dbReference>
<dbReference type="FunFam" id="3.30.70.20:FF:000032">
    <property type="entry name" value="Formate dehydrogenase, alpha subunit"/>
    <property type="match status" value="1"/>
</dbReference>
<dbReference type="FunFam" id="2.40.40.20:FF:000005">
    <property type="entry name" value="Periplasmic nitrate reductase"/>
    <property type="match status" value="1"/>
</dbReference>
<dbReference type="Gene3D" id="2.40.40.20">
    <property type="match status" value="1"/>
</dbReference>
<dbReference type="Gene3D" id="3.10.20.740">
    <property type="match status" value="1"/>
</dbReference>
<dbReference type="Gene3D" id="3.30.70.20">
    <property type="match status" value="1"/>
</dbReference>
<dbReference type="Gene3D" id="3.40.50.740">
    <property type="match status" value="1"/>
</dbReference>
<dbReference type="Gene3D" id="2.20.25.90">
    <property type="entry name" value="ADC-like domains"/>
    <property type="match status" value="1"/>
</dbReference>
<dbReference type="Gene3D" id="3.40.228.10">
    <property type="entry name" value="Dimethylsulfoxide Reductase, domain 2"/>
    <property type="match status" value="1"/>
</dbReference>
<dbReference type="InterPro" id="IPR036010">
    <property type="entry name" value="2Fe-2S_ferredoxin-like_sf"/>
</dbReference>
<dbReference type="InterPro" id="IPR001041">
    <property type="entry name" value="2Fe-2S_ferredoxin-type"/>
</dbReference>
<dbReference type="InterPro" id="IPR017896">
    <property type="entry name" value="4Fe4S_Fe-S-bd"/>
</dbReference>
<dbReference type="InterPro" id="IPR017900">
    <property type="entry name" value="4Fe4S_Fe_S_CS"/>
</dbReference>
<dbReference type="InterPro" id="IPR009010">
    <property type="entry name" value="Asp_de-COase-like_dom_sf"/>
</dbReference>
<dbReference type="InterPro" id="IPR041924">
    <property type="entry name" value="Formate_Dh-H_N"/>
</dbReference>
<dbReference type="InterPro" id="IPR006478">
    <property type="entry name" value="Formate_DH_asu"/>
</dbReference>
<dbReference type="InterPro" id="IPR006657">
    <property type="entry name" value="MoPterin_dinucl-bd_dom"/>
</dbReference>
<dbReference type="InterPro" id="IPR006656">
    <property type="entry name" value="Mopterin_OxRdtase"/>
</dbReference>
<dbReference type="InterPro" id="IPR006963">
    <property type="entry name" value="Mopterin_OxRdtase_4Fe-4S_dom"/>
</dbReference>
<dbReference type="InterPro" id="IPR006655">
    <property type="entry name" value="Mopterin_OxRdtase_prok_CS"/>
</dbReference>
<dbReference type="InterPro" id="IPR027467">
    <property type="entry name" value="MopterinOxRdtase_cofactor_BS"/>
</dbReference>
<dbReference type="InterPro" id="IPR019574">
    <property type="entry name" value="NADH_UbQ_OxRdtase_Gsu_4Fe4S-bd"/>
</dbReference>
<dbReference type="InterPro" id="IPR050123">
    <property type="entry name" value="Prok_molybdopt-oxidoreductase"/>
</dbReference>
<dbReference type="NCBIfam" id="TIGR01591">
    <property type="entry name" value="Fdh-alpha"/>
    <property type="match status" value="1"/>
</dbReference>
<dbReference type="PANTHER" id="PTHR43105:SF14">
    <property type="entry name" value="FORMATE DEHYDROGENASE H"/>
    <property type="match status" value="1"/>
</dbReference>
<dbReference type="PANTHER" id="PTHR43105">
    <property type="entry name" value="RESPIRATORY NITRATE REDUCTASE"/>
    <property type="match status" value="1"/>
</dbReference>
<dbReference type="Pfam" id="PF13510">
    <property type="entry name" value="Fer2_4"/>
    <property type="match status" value="1"/>
</dbReference>
<dbReference type="Pfam" id="PF12838">
    <property type="entry name" value="Fer4_7"/>
    <property type="match status" value="1"/>
</dbReference>
<dbReference type="Pfam" id="PF04879">
    <property type="entry name" value="Molybdop_Fe4S4"/>
    <property type="match status" value="1"/>
</dbReference>
<dbReference type="Pfam" id="PF00384">
    <property type="entry name" value="Molybdopterin"/>
    <property type="match status" value="1"/>
</dbReference>
<dbReference type="Pfam" id="PF01568">
    <property type="entry name" value="Molydop_binding"/>
    <property type="match status" value="1"/>
</dbReference>
<dbReference type="Pfam" id="PF10588">
    <property type="entry name" value="NADH-G_4Fe-4S_3"/>
    <property type="match status" value="1"/>
</dbReference>
<dbReference type="PIRSF" id="PIRSF036643">
    <property type="entry name" value="FDH_alpha"/>
    <property type="match status" value="1"/>
</dbReference>
<dbReference type="SMART" id="SM00926">
    <property type="entry name" value="Molybdop_Fe4S4"/>
    <property type="match status" value="1"/>
</dbReference>
<dbReference type="SMART" id="SM00929">
    <property type="entry name" value="NADH-G_4Fe-4S_3"/>
    <property type="match status" value="1"/>
</dbReference>
<dbReference type="SUPFAM" id="SSF54292">
    <property type="entry name" value="2Fe-2S ferredoxin-like"/>
    <property type="match status" value="1"/>
</dbReference>
<dbReference type="SUPFAM" id="SSF54862">
    <property type="entry name" value="4Fe-4S ferredoxins"/>
    <property type="match status" value="1"/>
</dbReference>
<dbReference type="SUPFAM" id="SSF50692">
    <property type="entry name" value="ADC-like"/>
    <property type="match status" value="1"/>
</dbReference>
<dbReference type="SUPFAM" id="SSF53706">
    <property type="entry name" value="Formate dehydrogenase/DMSO reductase, domains 1-3"/>
    <property type="match status" value="1"/>
</dbReference>
<dbReference type="PROSITE" id="PS51085">
    <property type="entry name" value="2FE2S_FER_2"/>
    <property type="match status" value="1"/>
</dbReference>
<dbReference type="PROSITE" id="PS00198">
    <property type="entry name" value="4FE4S_FER_1"/>
    <property type="match status" value="1"/>
</dbReference>
<dbReference type="PROSITE" id="PS51379">
    <property type="entry name" value="4FE4S_FER_2"/>
    <property type="match status" value="2"/>
</dbReference>
<dbReference type="PROSITE" id="PS51839">
    <property type="entry name" value="4FE4S_HC3"/>
    <property type="match status" value="1"/>
</dbReference>
<dbReference type="PROSITE" id="PS51669">
    <property type="entry name" value="4FE4S_MOW_BIS_MGD"/>
    <property type="match status" value="1"/>
</dbReference>
<dbReference type="PROSITE" id="PS00551">
    <property type="entry name" value="MOLYBDOPTERIN_PROK_1"/>
    <property type="match status" value="1"/>
</dbReference>
<dbReference type="PROSITE" id="PS00932">
    <property type="entry name" value="MOLYBDOPTERIN_PROK_3"/>
    <property type="match status" value="1"/>
</dbReference>
<accession>Q6GEC4</accession>
<keyword id="KW-0001">2Fe-2S</keyword>
<keyword id="KW-0004">4Fe-4S</keyword>
<keyword id="KW-0408">Iron</keyword>
<keyword id="KW-0411">Iron-sulfur</keyword>
<keyword id="KW-0479">Metal-binding</keyword>
<keyword id="KW-0500">Molybdenum</keyword>
<keyword id="KW-0520">NAD</keyword>
<keyword id="KW-0560">Oxidoreductase</keyword>
<keyword id="KW-0677">Repeat</keyword>
<comment type="catalytic activity">
    <reaction>
        <text>formate + NAD(+) = CO2 + NADH</text>
        <dbReference type="Rhea" id="RHEA:15985"/>
        <dbReference type="ChEBI" id="CHEBI:15740"/>
        <dbReference type="ChEBI" id="CHEBI:16526"/>
        <dbReference type="ChEBI" id="CHEBI:57540"/>
        <dbReference type="ChEBI" id="CHEBI:57945"/>
        <dbReference type="EC" id="1.17.1.9"/>
    </reaction>
</comment>
<comment type="cofactor">
    <cofactor evidence="1">
        <name>[2Fe-2S] cluster</name>
        <dbReference type="ChEBI" id="CHEBI:190135"/>
    </cofactor>
    <text evidence="1">Binds 1 [2Fe-2S] cluster.</text>
</comment>
<comment type="cofactor">
    <cofactor evidence="1">
        <name>[4Fe-4S] cluster</name>
        <dbReference type="ChEBI" id="CHEBI:49883"/>
    </cofactor>
    <text evidence="1">Binds 4 [4Fe-4S] clusters.</text>
</comment>
<comment type="cofactor">
    <cofactor evidence="1">
        <name>Mo-bis(molybdopterin guanine dinucleotide)</name>
        <dbReference type="ChEBI" id="CHEBI:60539"/>
    </cofactor>
    <text evidence="1">Binds 1 molybdenum-bis(molybdopterin guanine dinucleotide) (Mo-bis-MGD) cofactor per subunit.</text>
</comment>
<comment type="similarity">
    <text evidence="6">In the C-terminal section; belongs to the prokaryotic molybdopterin-containing oxidoreductase family.</text>
</comment>
<organism>
    <name type="scientific">Staphylococcus aureus (strain MRSA252)</name>
    <dbReference type="NCBI Taxonomy" id="282458"/>
    <lineage>
        <taxon>Bacteria</taxon>
        <taxon>Bacillati</taxon>
        <taxon>Bacillota</taxon>
        <taxon>Bacilli</taxon>
        <taxon>Bacillales</taxon>
        <taxon>Staphylococcaceae</taxon>
        <taxon>Staphylococcus</taxon>
    </lineage>
</organism>
<feature type="chain" id="PRO_0000304130" description="Putative formate dehydrogenase SAR2393">
    <location>
        <begin position="1"/>
        <end position="984"/>
    </location>
</feature>
<feature type="domain" description="2Fe-2S ferredoxin-type" evidence="2">
    <location>
        <begin position="3"/>
        <end position="79"/>
    </location>
</feature>
<feature type="domain" description="4Fe-4S His(Cys)3-ligated-type" evidence="5">
    <location>
        <begin position="79"/>
        <end position="119"/>
    </location>
</feature>
<feature type="domain" description="4Fe-4S ferredoxin-type 1" evidence="3">
    <location>
        <begin position="138"/>
        <end position="165"/>
    </location>
</feature>
<feature type="domain" description="4Fe-4S ferredoxin-type 2" evidence="3">
    <location>
        <begin position="181"/>
        <end position="211"/>
    </location>
</feature>
<feature type="domain" description="4Fe-4S Mo/W bis-MGD-type" evidence="4">
    <location>
        <begin position="257"/>
        <end position="313"/>
    </location>
</feature>
<feature type="region of interest" description="Formate dehydrogenase">
    <location>
        <begin position="252"/>
        <end position="984"/>
    </location>
</feature>
<feature type="binding site" evidence="1">
    <location>
        <position position="37"/>
    </location>
    <ligand>
        <name>[2Fe-2S] cluster</name>
        <dbReference type="ChEBI" id="CHEBI:190135"/>
    </ligand>
</feature>
<feature type="binding site" evidence="1">
    <location>
        <position position="48"/>
    </location>
    <ligand>
        <name>[2Fe-2S] cluster</name>
        <dbReference type="ChEBI" id="CHEBI:190135"/>
    </ligand>
</feature>
<feature type="binding site" evidence="1">
    <location>
        <position position="51"/>
    </location>
    <ligand>
        <name>[2Fe-2S] cluster</name>
        <dbReference type="ChEBI" id="CHEBI:190135"/>
    </ligand>
</feature>
<feature type="binding site" evidence="1">
    <location>
        <position position="63"/>
    </location>
    <ligand>
        <name>[2Fe-2S] cluster</name>
        <dbReference type="ChEBI" id="CHEBI:190135"/>
    </ligand>
</feature>
<feature type="binding site" evidence="5">
    <location>
        <position position="95"/>
    </location>
    <ligand>
        <name>[4Fe-4S] cluster</name>
        <dbReference type="ChEBI" id="CHEBI:49883"/>
        <label>1</label>
    </ligand>
</feature>
<feature type="binding site" evidence="5">
    <location>
        <position position="99"/>
    </location>
    <ligand>
        <name>[4Fe-4S] cluster</name>
        <dbReference type="ChEBI" id="CHEBI:49883"/>
        <label>1</label>
    </ligand>
</feature>
<feature type="binding site" evidence="5">
    <location>
        <position position="102"/>
    </location>
    <ligand>
        <name>[4Fe-4S] cluster</name>
        <dbReference type="ChEBI" id="CHEBI:49883"/>
        <label>1</label>
    </ligand>
</feature>
<feature type="binding site" evidence="5">
    <location>
        <position position="109"/>
    </location>
    <ligand>
        <name>[4Fe-4S] cluster</name>
        <dbReference type="ChEBI" id="CHEBI:49883"/>
        <label>1</label>
    </ligand>
</feature>
<feature type="binding site" evidence="1">
    <location>
        <position position="147"/>
    </location>
    <ligand>
        <name>[4Fe-4S] cluster</name>
        <dbReference type="ChEBI" id="CHEBI:49883"/>
        <label>2</label>
    </ligand>
</feature>
<feature type="binding site" evidence="1">
    <location>
        <position position="150"/>
    </location>
    <ligand>
        <name>[4Fe-4S] cluster</name>
        <dbReference type="ChEBI" id="CHEBI:49883"/>
        <label>2</label>
    </ligand>
</feature>
<feature type="binding site" evidence="1">
    <location>
        <position position="153"/>
    </location>
    <ligand>
        <name>[4Fe-4S] cluster</name>
        <dbReference type="ChEBI" id="CHEBI:49883"/>
        <label>2</label>
    </ligand>
</feature>
<feature type="binding site" evidence="1">
    <location>
        <position position="157"/>
    </location>
    <ligand>
        <name>[4Fe-4S] cluster</name>
        <dbReference type="ChEBI" id="CHEBI:49883"/>
        <label>3</label>
    </ligand>
</feature>
<feature type="binding site" evidence="1">
    <location>
        <position position="190"/>
    </location>
    <ligand>
        <name>[4Fe-4S] cluster</name>
        <dbReference type="ChEBI" id="CHEBI:49883"/>
        <label>3</label>
    </ligand>
</feature>
<feature type="binding site" evidence="1">
    <location>
        <position position="193"/>
    </location>
    <ligand>
        <name>[4Fe-4S] cluster</name>
        <dbReference type="ChEBI" id="CHEBI:49883"/>
        <label>3</label>
    </ligand>
</feature>
<feature type="binding site" evidence="1">
    <location>
        <position position="196"/>
    </location>
    <ligand>
        <name>[4Fe-4S] cluster</name>
        <dbReference type="ChEBI" id="CHEBI:49883"/>
        <label>3</label>
    </ligand>
</feature>
<feature type="binding site" evidence="1">
    <location>
        <position position="200"/>
    </location>
    <ligand>
        <name>[4Fe-4S] cluster</name>
        <dbReference type="ChEBI" id="CHEBI:49883"/>
        <label>2</label>
    </ligand>
</feature>
<feature type="binding site" evidence="1">
    <location>
        <position position="264"/>
    </location>
    <ligand>
        <name>[4Fe-4S] cluster</name>
        <dbReference type="ChEBI" id="CHEBI:49883"/>
        <label>4</label>
    </ligand>
</feature>
<feature type="binding site" evidence="1">
    <location>
        <position position="267"/>
    </location>
    <ligand>
        <name>[4Fe-4S] cluster</name>
        <dbReference type="ChEBI" id="CHEBI:49883"/>
        <label>4</label>
    </ligand>
</feature>
<feature type="binding site" evidence="1">
    <location>
        <position position="271"/>
    </location>
    <ligand>
        <name>[4Fe-4S] cluster</name>
        <dbReference type="ChEBI" id="CHEBI:49883"/>
        <label>4</label>
    </ligand>
</feature>
<feature type="binding site" evidence="1">
    <location>
        <position position="299"/>
    </location>
    <ligand>
        <name>[4Fe-4S] cluster</name>
        <dbReference type="ChEBI" id="CHEBI:49883"/>
        <label>4</label>
    </ligand>
</feature>
<name>FDHL_STAAR</name>
<proteinExistence type="inferred from homology"/>
<protein>
    <recommendedName>
        <fullName>Putative formate dehydrogenase SAR2393</fullName>
        <ecNumber>1.17.1.9</ecNumber>
    </recommendedName>
</protein>
<evidence type="ECO:0000250" key="1"/>
<evidence type="ECO:0000255" key="2">
    <source>
        <dbReference type="PROSITE-ProRule" id="PRU00465"/>
    </source>
</evidence>
<evidence type="ECO:0000255" key="3">
    <source>
        <dbReference type="PROSITE-ProRule" id="PRU00711"/>
    </source>
</evidence>
<evidence type="ECO:0000255" key="4">
    <source>
        <dbReference type="PROSITE-ProRule" id="PRU01004"/>
    </source>
</evidence>
<evidence type="ECO:0000255" key="5">
    <source>
        <dbReference type="PROSITE-ProRule" id="PRU01184"/>
    </source>
</evidence>
<evidence type="ECO:0000305" key="6"/>
<sequence length="984" mass="111342">MQEHLVVTLDGKDYLVEPGTNLLEFIKSQDTFVPSICYNESMGPIQTCDTCTVEIDGKIERSCSTVIDRPMTVNTVNNDVKDAQKEALDRILEKHMLYCTVCDYNNGDCEIHNTMDAWGLQHQTYEYKEKPYEKDYGPFYRYDPNQCILCGRCVEACQDIELNETIRIDWDREHPRVIWDNDVPINESSCVSCGQCATVCPCNAMMEVNMEGNAGYMTDTEPGSLAAMIDLTKKAEPGYGPLFAISDSEAEMRKERIKKTKTVCTYCGVGCSFEVWTKDREILKVQPSHDSPANKIATCVKGKFSWGHINSDQRLTKPLVRKNGEFHEVEWDEALNVIADNFTSIKEKHGPDALSFISSSKATNEESYLMQKLARQVIGTNNVDNCSRYCQAPATKGLFRTVGHGGDSGSIEDLEKAAMSVLIGTNTAEAHPVIASRMKRAQKLFGQKIHVFDIRKHEMAERADRFYQPKPGTDLAWLSAVTKYIIDHDLHDKAFIEEWVEDFDEYYKSLETFTMAFAEEATGIPEAELIKFAEECAKAESVVICWAMGITQQDIGSDSSTAISNLLLVTGNYRRPGTGAYPLRGHNNVQGCSDIGSMPDKITGYQSIEADDIRAKFEKEYGVKLNPKAGKDNHEMVEGIHDGQIHSLYLYGEDTGIVDSNINFVQAAFEKLDFMVVQDEFLTFTATYADVVLPASPSLEKDGTFTNTERRIQRLYQALKPLGDSKPDWKIFQAIANKLSFDWNYKHPSEIMDEIARLTPLYAGVSYERLEGFNSLQWPVHPDGTDEPILYLEGFNFDNGKAKLFPLSFDNYFKQDEVYDIHVNNGRLLEHFHEGNMTYQTPMLKYKVPRAFVEISPELAEDRGIHEGAEVKLISETGEAVLQVHVTDRVKGKEIYIPLNNDAMENGDLGAINLLTNSDVDQYTDTPSYKRTSCRMEVITKRGKSPLNPNNFRVNKKRHPQYSVQVQKKWERPDYVFPGNQVDK</sequence>